<dbReference type="EC" id="5.5.1.6"/>
<dbReference type="EMBL" id="Z67980">
    <property type="protein sequence ID" value="CAA91921.1"/>
    <property type="molecule type" value="mRNA"/>
</dbReference>
<dbReference type="SMR" id="Q42663"/>
<dbReference type="UniPathway" id="UPA00154"/>
<dbReference type="GO" id="GO:0045430">
    <property type="term" value="F:chalcone isomerase activity"/>
    <property type="evidence" value="ECO:0007669"/>
    <property type="project" value="UniProtKB-EC"/>
</dbReference>
<dbReference type="GO" id="GO:0009813">
    <property type="term" value="P:flavonoid biosynthetic process"/>
    <property type="evidence" value="ECO:0007669"/>
    <property type="project" value="UniProtKB-UniPathway"/>
</dbReference>
<dbReference type="Gene3D" id="1.10.890.20">
    <property type="match status" value="1"/>
</dbReference>
<dbReference type="Gene3D" id="3.50.70.10">
    <property type="match status" value="1"/>
</dbReference>
<dbReference type="InterPro" id="IPR044164">
    <property type="entry name" value="CFI"/>
</dbReference>
<dbReference type="InterPro" id="IPR016087">
    <property type="entry name" value="Chalcone_isomerase"/>
</dbReference>
<dbReference type="InterPro" id="IPR016088">
    <property type="entry name" value="Chalcone_isomerase_3-sand"/>
</dbReference>
<dbReference type="InterPro" id="IPR016089">
    <property type="entry name" value="Chalcone_isomerase_bundle_sf"/>
</dbReference>
<dbReference type="InterPro" id="IPR036298">
    <property type="entry name" value="Chalcone_isomerase_sf"/>
</dbReference>
<dbReference type="PANTHER" id="PTHR28039:SF8">
    <property type="entry name" value="CHALCONE--FLAVANONE ISOMERASE 1-RELATED"/>
    <property type="match status" value="1"/>
</dbReference>
<dbReference type="PANTHER" id="PTHR28039">
    <property type="entry name" value="CHALCONE--FLAVONONE ISOMERASE 1-RELATED"/>
    <property type="match status" value="1"/>
</dbReference>
<dbReference type="Pfam" id="PF02431">
    <property type="entry name" value="Chalcone"/>
    <property type="match status" value="1"/>
</dbReference>
<dbReference type="SUPFAM" id="SSF54626">
    <property type="entry name" value="Chalcone isomerase"/>
    <property type="match status" value="1"/>
</dbReference>
<evidence type="ECO:0000250" key="1"/>
<evidence type="ECO:0000305" key="2"/>
<protein>
    <recommendedName>
        <fullName>Chalcone--flavanone isomerase</fullName>
        <shortName>Chalcone isomerase</shortName>
        <ecNumber>5.5.1.6</ecNumber>
    </recommendedName>
</protein>
<accession>Q42663</accession>
<keyword id="KW-0284">Flavonoid biosynthesis</keyword>
<keyword id="KW-0413">Isomerase</keyword>
<sequence>EFPTPLTTGLQVESIVFPSSVKPPGSTNSLFLGGAGVRGMEIQGNFVKFTGIGVYLEDKAIPLLAAKRKGKTVAELLDSVEFFRDIVTGPFEKFTQVTMILPLTGKQYSEKVSEMCVGVWKALGTYTDADGTTIEKFLEVFKDENFLPGSSILFTTSPLGSLTISFSKDGTIPEAANVVLENEKLAQAVIESVIGKNGVSPATKQSLASRLSDLMKQFDEESNGSVEVEDLSKNSCK</sequence>
<feature type="chain" id="PRO_0000166429" description="Chalcone--flavanone isomerase">
    <location>
        <begin position="1" status="less than"/>
        <end position="237"/>
    </location>
</feature>
<feature type="binding site" evidence="1">
    <location>
        <position position="50"/>
    </location>
    <ligand>
        <name>substrate</name>
    </ligand>
</feature>
<feature type="binding site" evidence="1">
    <location>
        <position position="192"/>
    </location>
    <ligand>
        <name>substrate</name>
    </ligand>
</feature>
<feature type="site" description="Important for catalytic activity" evidence="1">
    <location>
        <position position="108"/>
    </location>
</feature>
<feature type="non-terminal residue">
    <location>
        <position position="1"/>
    </location>
</feature>
<comment type="function">
    <text evidence="1">Catalyzes the intramolecular cyclization of bicyclic chalcones into tricyclic (S)-flavanones. Responsible for the isomerization of 4,2',4',6'-tetrahydroxychalcone (also termed chalcone) into naringenin (By similarity).</text>
</comment>
<comment type="catalytic activity">
    <reaction>
        <text>a chalcone = a flavanone.</text>
        <dbReference type="EC" id="5.5.1.6"/>
    </reaction>
</comment>
<comment type="pathway">
    <text>Secondary metabolite biosynthesis; flavonoid biosynthesis.</text>
</comment>
<comment type="miscellaneous">
    <text>Part of the biosynthetic pathway for all classes of flavonoids, a large class of secondary plant metabolites, many of which are brightly colored.</text>
</comment>
<comment type="similarity">
    <text evidence="2">Belongs to the chalcone isomerase family.</text>
</comment>
<organism>
    <name type="scientific">Callistephus chinensis</name>
    <name type="common">China aster</name>
    <name type="synonym">Callistemma chinense</name>
    <dbReference type="NCBI Taxonomy" id="13379"/>
    <lineage>
        <taxon>Eukaryota</taxon>
        <taxon>Viridiplantae</taxon>
        <taxon>Streptophyta</taxon>
        <taxon>Embryophyta</taxon>
        <taxon>Tracheophyta</taxon>
        <taxon>Spermatophyta</taxon>
        <taxon>Magnoliopsida</taxon>
        <taxon>eudicotyledons</taxon>
        <taxon>Gunneridae</taxon>
        <taxon>Pentapetalae</taxon>
        <taxon>asterids</taxon>
        <taxon>campanulids</taxon>
        <taxon>Asterales</taxon>
        <taxon>Asteraceae</taxon>
        <taxon>Asteroideae</taxon>
        <taxon>Astereae</taxon>
        <taxon>Australasian lineages</taxon>
        <taxon>Asterinae</taxon>
        <taxon>Callistephus</taxon>
    </lineage>
</organism>
<proteinExistence type="evidence at transcript level"/>
<gene>
    <name type="primary">CHI</name>
    <name type="synonym">CH</name>
</gene>
<name>CFI_CALCH</name>
<reference key="1">
    <citation type="submission" date="1995-11" db="EMBL/GenBank/DDBJ databases">
        <authorList>
            <person name="Henkel J."/>
            <person name="Wassenegger M."/>
            <person name="Sommer H."/>
            <person name="Forkmann G."/>
        </authorList>
    </citation>
    <scope>NUCLEOTIDE SEQUENCE [MRNA]</scope>
    <source>
        <strain>L 01</strain>
        <tissue>Petal</tissue>
    </source>
</reference>